<sequence length="130" mass="14277">MPNSMEEMNLRRSRRRLPRGVIHIQASFNNTIITVTDTRGRVVSWSSAGACGFKGARKSTPFAAQTAAENAIRILIDRGLKQAEVMISGPGPGRDTALRAIRRSGIVLNFVRDVTPMPHNGCRPPGKRRV</sequence>
<feature type="chain" id="PRO_0000364208" description="Small ribosomal subunit protein uS11c">
    <location>
        <begin position="1"/>
        <end position="130"/>
    </location>
</feature>
<accession>B0YPQ8</accession>
<dbReference type="EMBL" id="EU043314">
    <property type="protein sequence ID" value="ABS54506.1"/>
    <property type="molecule type" value="Genomic_DNA"/>
</dbReference>
<dbReference type="RefSeq" id="YP_001687244.1">
    <property type="nucleotide sequence ID" value="NC_010359.1"/>
</dbReference>
<dbReference type="SMR" id="B0YPQ8"/>
<dbReference type="GeneID" id="5952194"/>
<dbReference type="GO" id="GO:0009536">
    <property type="term" value="C:plastid"/>
    <property type="evidence" value="ECO:0007669"/>
    <property type="project" value="UniProtKB-SubCell"/>
</dbReference>
<dbReference type="GO" id="GO:1990904">
    <property type="term" value="C:ribonucleoprotein complex"/>
    <property type="evidence" value="ECO:0007669"/>
    <property type="project" value="UniProtKB-KW"/>
</dbReference>
<dbReference type="GO" id="GO:0005840">
    <property type="term" value="C:ribosome"/>
    <property type="evidence" value="ECO:0007669"/>
    <property type="project" value="UniProtKB-KW"/>
</dbReference>
<dbReference type="GO" id="GO:0019843">
    <property type="term" value="F:rRNA binding"/>
    <property type="evidence" value="ECO:0007669"/>
    <property type="project" value="UniProtKB-KW"/>
</dbReference>
<dbReference type="GO" id="GO:0003735">
    <property type="term" value="F:structural constituent of ribosome"/>
    <property type="evidence" value="ECO:0007669"/>
    <property type="project" value="InterPro"/>
</dbReference>
<dbReference type="GO" id="GO:0006412">
    <property type="term" value="P:translation"/>
    <property type="evidence" value="ECO:0007669"/>
    <property type="project" value="InterPro"/>
</dbReference>
<dbReference type="FunFam" id="3.30.420.80:FF:000003">
    <property type="entry name" value="30S ribosomal protein S11, chloroplastic"/>
    <property type="match status" value="1"/>
</dbReference>
<dbReference type="Gene3D" id="3.30.420.80">
    <property type="entry name" value="Ribosomal protein S11"/>
    <property type="match status" value="1"/>
</dbReference>
<dbReference type="HAMAP" id="MF_01310">
    <property type="entry name" value="Ribosomal_uS11"/>
    <property type="match status" value="1"/>
</dbReference>
<dbReference type="InterPro" id="IPR001971">
    <property type="entry name" value="Ribosomal_uS11"/>
</dbReference>
<dbReference type="InterPro" id="IPR019981">
    <property type="entry name" value="Ribosomal_uS11_bac-type"/>
</dbReference>
<dbReference type="InterPro" id="IPR018102">
    <property type="entry name" value="Ribosomal_uS11_CS"/>
</dbReference>
<dbReference type="InterPro" id="IPR036967">
    <property type="entry name" value="Ribosomal_uS11_sf"/>
</dbReference>
<dbReference type="NCBIfam" id="NF003698">
    <property type="entry name" value="PRK05309.1"/>
    <property type="match status" value="1"/>
</dbReference>
<dbReference type="NCBIfam" id="TIGR03632">
    <property type="entry name" value="uS11_bact"/>
    <property type="match status" value="1"/>
</dbReference>
<dbReference type="PANTHER" id="PTHR11759">
    <property type="entry name" value="40S RIBOSOMAL PROTEIN S14/30S RIBOSOMAL PROTEIN S11"/>
    <property type="match status" value="1"/>
</dbReference>
<dbReference type="Pfam" id="PF00411">
    <property type="entry name" value="Ribosomal_S11"/>
    <property type="match status" value="1"/>
</dbReference>
<dbReference type="PIRSF" id="PIRSF002131">
    <property type="entry name" value="Ribosomal_S11"/>
    <property type="match status" value="1"/>
</dbReference>
<dbReference type="SUPFAM" id="SSF53137">
    <property type="entry name" value="Translational machinery components"/>
    <property type="match status" value="1"/>
</dbReference>
<dbReference type="PROSITE" id="PS00054">
    <property type="entry name" value="RIBOSOMAL_S11"/>
    <property type="match status" value="1"/>
</dbReference>
<reference key="1">
    <citation type="journal article" date="2008" name="Mol. Biol. Evol.">
        <title>Functional gene losses occur with minimal size reduction in the plastid genome of the parasitic liverwort Aneura mirabilis.</title>
        <authorList>
            <person name="Wickett N.J."/>
            <person name="Zhang Y."/>
            <person name="Hansen S.K."/>
            <person name="Roper J.M."/>
            <person name="Kuehl J.V."/>
            <person name="Plock S.A."/>
            <person name="Wolf P.G."/>
            <person name="dePamphilis C.W."/>
            <person name="Boore J.L."/>
            <person name="Goffinet B."/>
        </authorList>
    </citation>
    <scope>NUCLEOTIDE SEQUENCE [LARGE SCALE GENOMIC DNA]</scope>
</reference>
<organism>
    <name type="scientific">Aneura mirabilis</name>
    <name type="common">Parasitic liverwort</name>
    <name type="synonym">Cryptothallus mirabilis</name>
    <dbReference type="NCBI Taxonomy" id="280810"/>
    <lineage>
        <taxon>Eukaryota</taxon>
        <taxon>Viridiplantae</taxon>
        <taxon>Streptophyta</taxon>
        <taxon>Embryophyta</taxon>
        <taxon>Marchantiophyta</taxon>
        <taxon>Jungermanniopsida</taxon>
        <taxon>Metzgeriidae</taxon>
        <taxon>Metzgeriales</taxon>
        <taxon>Aneuraceae</taxon>
        <taxon>Aneura</taxon>
    </lineage>
</organism>
<gene>
    <name evidence="1" type="primary">rps11</name>
</gene>
<geneLocation type="non-photosynthetic plastid"/>
<protein>
    <recommendedName>
        <fullName evidence="1">Small ribosomal subunit protein uS11c</fullName>
    </recommendedName>
    <alternativeName>
        <fullName evidence="2">30S ribosomal protein S11, plastid</fullName>
    </alternativeName>
</protein>
<evidence type="ECO:0000255" key="1">
    <source>
        <dbReference type="HAMAP-Rule" id="MF_01310"/>
    </source>
</evidence>
<evidence type="ECO:0000305" key="2"/>
<keyword id="KW-0934">Plastid</keyword>
<keyword id="KW-0687">Ribonucleoprotein</keyword>
<keyword id="KW-0689">Ribosomal protein</keyword>
<keyword id="KW-0694">RNA-binding</keyword>
<keyword id="KW-0699">rRNA-binding</keyword>
<comment type="subunit">
    <text evidence="1">Part of the 30S ribosomal subunit.</text>
</comment>
<comment type="subcellular location">
    <subcellularLocation>
        <location>Plastid</location>
    </subcellularLocation>
</comment>
<comment type="similarity">
    <text evidence="1">Belongs to the universal ribosomal protein uS11 family.</text>
</comment>
<proteinExistence type="inferred from homology"/>
<name>RR11_ANEMR</name>